<feature type="chain" id="PRO_0000322108" description="Riboflavin kinase">
    <location>
        <begin position="1"/>
        <end position="220"/>
    </location>
</feature>
<feature type="region of interest" description="H-T-H motif-like">
    <location>
        <begin position="1"/>
        <end position="92"/>
    </location>
</feature>
<feature type="region of interest" description="Riboflavin kinase">
    <location>
        <begin position="93"/>
        <end position="220"/>
    </location>
</feature>
<feature type="binding site" evidence="1">
    <location>
        <begin position="102"/>
        <end position="107"/>
    </location>
    <ligand>
        <name>CDP</name>
        <dbReference type="ChEBI" id="CHEBI:58069"/>
    </ligand>
</feature>
<feature type="binding site" evidence="1">
    <location>
        <position position="131"/>
    </location>
    <ligand>
        <name>Mg(2+)</name>
        <dbReference type="ChEBI" id="CHEBI:18420"/>
    </ligand>
</feature>
<feature type="binding site" evidence="1">
    <location>
        <position position="133"/>
    </location>
    <ligand>
        <name>Mg(2+)</name>
        <dbReference type="ChEBI" id="CHEBI:18420"/>
    </ligand>
</feature>
<feature type="binding site" evidence="1">
    <location>
        <position position="188"/>
    </location>
    <ligand>
        <name>FMN</name>
        <dbReference type="ChEBI" id="CHEBI:58210"/>
    </ligand>
</feature>
<feature type="binding site" evidence="1">
    <location>
        <position position="195"/>
    </location>
    <ligand>
        <name>FMN</name>
        <dbReference type="ChEBI" id="CHEBI:58210"/>
    </ligand>
</feature>
<feature type="binding site" evidence="1">
    <location>
        <begin position="200"/>
        <end position="203"/>
    </location>
    <ligand>
        <name>CDP</name>
        <dbReference type="ChEBI" id="CHEBI:58069"/>
    </ligand>
</feature>
<keyword id="KW-0285">Flavoprotein</keyword>
<keyword id="KW-0288">FMN</keyword>
<keyword id="KW-0418">Kinase</keyword>
<keyword id="KW-0460">Magnesium</keyword>
<keyword id="KW-0479">Metal-binding</keyword>
<keyword id="KW-0547">Nucleotide-binding</keyword>
<keyword id="KW-0808">Transferase</keyword>
<gene>
    <name type="primary">ribK</name>
    <name type="ordered locus">TV0519</name>
    <name type="ORF">TVG0510159</name>
</gene>
<proteinExistence type="inferred from homology"/>
<organism>
    <name type="scientific">Thermoplasma volcanium (strain ATCC 51530 / DSM 4299 / JCM 9571 / NBRC 15438 / GSS1)</name>
    <dbReference type="NCBI Taxonomy" id="273116"/>
    <lineage>
        <taxon>Archaea</taxon>
        <taxon>Methanobacteriati</taxon>
        <taxon>Thermoplasmatota</taxon>
        <taxon>Thermoplasmata</taxon>
        <taxon>Thermoplasmatales</taxon>
        <taxon>Thermoplasmataceae</taxon>
        <taxon>Thermoplasma</taxon>
    </lineage>
</organism>
<protein>
    <recommendedName>
        <fullName>Riboflavin kinase</fullName>
        <shortName>RFK</shortName>
        <ecNumber>2.7.1.161</ecNumber>
    </recommendedName>
    <alternativeName>
        <fullName>CTP-dependent riboflavin kinase</fullName>
    </alternativeName>
    <alternativeName>
        <fullName>CTP:riboflavin 5'-phosphotransferase</fullName>
    </alternativeName>
    <alternativeName>
        <fullName>Flavokinase</fullName>
    </alternativeName>
</protein>
<accession>Q97BD7</accession>
<comment type="function">
    <text evidence="1">Catalyzes the CTP-dependent phosphorylation of riboflavin (vitamin B2) to form flavin mononucleotide (FMN).</text>
</comment>
<comment type="catalytic activity">
    <reaction>
        <text>riboflavin + CTP = CDP + FMN + H(+)</text>
        <dbReference type="Rhea" id="RHEA:25021"/>
        <dbReference type="ChEBI" id="CHEBI:15378"/>
        <dbReference type="ChEBI" id="CHEBI:37563"/>
        <dbReference type="ChEBI" id="CHEBI:57986"/>
        <dbReference type="ChEBI" id="CHEBI:58069"/>
        <dbReference type="ChEBI" id="CHEBI:58210"/>
        <dbReference type="EC" id="2.7.1.161"/>
    </reaction>
</comment>
<comment type="cofactor">
    <cofactor evidence="1">
        <name>Mg(2+)</name>
        <dbReference type="ChEBI" id="CHEBI:18420"/>
    </cofactor>
    <text evidence="1">Binds 1 Mg(2+) ion per subunit.</text>
</comment>
<comment type="pathway">
    <text>Cofactor biosynthesis; FMN biosynthesis; FMN from riboflavin (CTP route): step 1/1.</text>
</comment>
<comment type="similarity">
    <text evidence="2">Belongs to the archaeal riboflavin kinase family.</text>
</comment>
<reference key="1">
    <citation type="journal article" date="2000" name="Proc. Natl. Acad. Sci. U.S.A.">
        <title>Archaeal adaptation to higher temperatures revealed by genomic sequence of Thermoplasma volcanium.</title>
        <authorList>
            <person name="Kawashima T."/>
            <person name="Amano N."/>
            <person name="Koike H."/>
            <person name="Makino S."/>
            <person name="Higuchi S."/>
            <person name="Kawashima-Ohya Y."/>
            <person name="Watanabe K."/>
            <person name="Yamazaki M."/>
            <person name="Kanehori K."/>
            <person name="Kawamoto T."/>
            <person name="Nunoshiba T."/>
            <person name="Yamamoto Y."/>
            <person name="Aramaki H."/>
            <person name="Makino K."/>
            <person name="Suzuki M."/>
        </authorList>
    </citation>
    <scope>NUCLEOTIDE SEQUENCE [LARGE SCALE GENOMIC DNA]</scope>
    <source>
        <strain>ATCC 51530 / DSM 4299 / JCM 9571 / NBRC 15438 / GSS1</strain>
    </source>
</reference>
<evidence type="ECO:0000250" key="1"/>
<evidence type="ECO:0000305" key="2"/>
<sequence length="220" mass="24808">MDTSDQYYRAIKKIKEASDSSNKAYLTSSKLANMLGLSQQSASRIIIDLEKLGYITRTVSKRGQLLTITEKGLDLLYTEFAELSRILSIKSNIVMTGIVVPGMGEGKYYISRKQYIIQFQEKLGIIPYLGTLNIKVDPSSIPELRKLRGFTGIHIEGFRTEDRTFGSVKAFRCKTNGVPSFLIMPERTVYTDVVEIISDKYLRNELNLKDGDEVTIEVTA</sequence>
<name>RIFK_THEVO</name>
<dbReference type="EC" id="2.7.1.161"/>
<dbReference type="EMBL" id="BA000011">
    <property type="protein sequence ID" value="BAB59661.1"/>
    <property type="molecule type" value="Genomic_DNA"/>
</dbReference>
<dbReference type="RefSeq" id="WP_010916777.1">
    <property type="nucleotide sequence ID" value="NC_002689.2"/>
</dbReference>
<dbReference type="SMR" id="Q97BD7"/>
<dbReference type="STRING" id="273116.gene:9381303"/>
<dbReference type="PaxDb" id="273116-14324734"/>
<dbReference type="GeneID" id="1441035"/>
<dbReference type="KEGG" id="tvo:TVG0510159"/>
<dbReference type="eggNOG" id="arCOG01904">
    <property type="taxonomic scope" value="Archaea"/>
</dbReference>
<dbReference type="HOGENOM" id="CLU_088476_0_0_2"/>
<dbReference type="OrthoDB" id="30955at2157"/>
<dbReference type="PhylomeDB" id="Q97BD7"/>
<dbReference type="UniPathway" id="UPA00276">
    <property type="reaction ID" value="UER00929"/>
</dbReference>
<dbReference type="Proteomes" id="UP000001017">
    <property type="component" value="Chromosome"/>
</dbReference>
<dbReference type="GO" id="GO:0003700">
    <property type="term" value="F:DNA-binding transcription factor activity"/>
    <property type="evidence" value="ECO:0007669"/>
    <property type="project" value="InterPro"/>
</dbReference>
<dbReference type="GO" id="GO:0046872">
    <property type="term" value="F:metal ion binding"/>
    <property type="evidence" value="ECO:0007669"/>
    <property type="project" value="UniProtKB-KW"/>
</dbReference>
<dbReference type="GO" id="GO:0000166">
    <property type="term" value="F:nucleotide binding"/>
    <property type="evidence" value="ECO:0007669"/>
    <property type="project" value="UniProtKB-KW"/>
</dbReference>
<dbReference type="GO" id="GO:0008531">
    <property type="term" value="F:riboflavin kinase activity"/>
    <property type="evidence" value="ECO:0007669"/>
    <property type="project" value="InterPro"/>
</dbReference>
<dbReference type="GO" id="GO:0009398">
    <property type="term" value="P:FMN biosynthetic process"/>
    <property type="evidence" value="ECO:0007669"/>
    <property type="project" value="UniProtKB-UniPathway"/>
</dbReference>
<dbReference type="GO" id="GO:0009231">
    <property type="term" value="P:riboflavin biosynthetic process"/>
    <property type="evidence" value="ECO:0007669"/>
    <property type="project" value="InterPro"/>
</dbReference>
<dbReference type="Gene3D" id="2.40.30.30">
    <property type="entry name" value="Riboflavin kinase-like"/>
    <property type="match status" value="1"/>
</dbReference>
<dbReference type="Gene3D" id="1.10.10.10">
    <property type="entry name" value="Winged helix-like DNA-binding domain superfamily/Winged helix DNA-binding domain"/>
    <property type="match status" value="1"/>
</dbReference>
<dbReference type="InterPro" id="IPR000835">
    <property type="entry name" value="HTH_MarR-typ"/>
</dbReference>
<dbReference type="InterPro" id="IPR039063">
    <property type="entry name" value="RibK_CTP-dep"/>
</dbReference>
<dbReference type="InterPro" id="IPR023602">
    <property type="entry name" value="Riboflavin_kinase_CTP-dep"/>
</dbReference>
<dbReference type="InterPro" id="IPR023465">
    <property type="entry name" value="Riboflavin_kinase_dom_sf"/>
</dbReference>
<dbReference type="InterPro" id="IPR036388">
    <property type="entry name" value="WH-like_DNA-bd_sf"/>
</dbReference>
<dbReference type="InterPro" id="IPR036390">
    <property type="entry name" value="WH_DNA-bd_sf"/>
</dbReference>
<dbReference type="NCBIfam" id="NF010762">
    <property type="entry name" value="PRK14165.1"/>
    <property type="match status" value="1"/>
</dbReference>
<dbReference type="PANTHER" id="PTHR40706">
    <property type="entry name" value="RIBOFLAVIN KINASE"/>
    <property type="match status" value="1"/>
</dbReference>
<dbReference type="PANTHER" id="PTHR40706:SF1">
    <property type="entry name" value="RIBOFLAVIN KINASE"/>
    <property type="match status" value="1"/>
</dbReference>
<dbReference type="Pfam" id="PF01982">
    <property type="entry name" value="CTP-dep_RFKase"/>
    <property type="match status" value="1"/>
</dbReference>
<dbReference type="Pfam" id="PF12802">
    <property type="entry name" value="MarR_2"/>
    <property type="match status" value="1"/>
</dbReference>
<dbReference type="SUPFAM" id="SSF82114">
    <property type="entry name" value="Riboflavin kinase-like"/>
    <property type="match status" value="1"/>
</dbReference>
<dbReference type="SUPFAM" id="SSF46785">
    <property type="entry name" value="Winged helix' DNA-binding domain"/>
    <property type="match status" value="1"/>
</dbReference>